<evidence type="ECO:0000255" key="1">
    <source>
        <dbReference type="HAMAP-Rule" id="MF_00503"/>
    </source>
</evidence>
<evidence type="ECO:0000305" key="2"/>
<keyword id="KW-1185">Reference proteome</keyword>
<keyword id="KW-0687">Ribonucleoprotein</keyword>
<keyword id="KW-0689">Ribosomal protein</keyword>
<keyword id="KW-0694">RNA-binding</keyword>
<keyword id="KW-0699">rRNA-binding</keyword>
<sequence length="150" mass="15940">MKLILTAAVENLGVAGDIVEVKNGYGRNLLLPRGLAIVATPGAEKQIEGIKRAQEAREIRDLDHAREVKVALEALEGVTIAVRTSESGKLFGSVKTDDIVDAVKAAGGPNLDKRAIVLPKNLVKTTGKYQVEAKLTDGIVSRVKFEVVAA</sequence>
<protein>
    <recommendedName>
        <fullName evidence="1">Large ribosomal subunit protein bL9</fullName>
    </recommendedName>
    <alternativeName>
        <fullName evidence="2">50S ribosomal protein L9</fullName>
    </alternativeName>
</protein>
<proteinExistence type="inferred from homology"/>
<organism>
    <name type="scientific">Corynebacterium glutamicum (strain ATCC 13032 / DSM 20300 / JCM 1318 / BCRC 11384 / CCUG 27702 / LMG 3730 / NBRC 12168 / NCIMB 10025 / NRRL B-2784 / 534)</name>
    <dbReference type="NCBI Taxonomy" id="196627"/>
    <lineage>
        <taxon>Bacteria</taxon>
        <taxon>Bacillati</taxon>
        <taxon>Actinomycetota</taxon>
        <taxon>Actinomycetes</taxon>
        <taxon>Mycobacteriales</taxon>
        <taxon>Corynebacteriaceae</taxon>
        <taxon>Corynebacterium</taxon>
    </lineage>
</organism>
<reference key="1">
    <citation type="journal article" date="2003" name="Appl. Microbiol. Biotechnol.">
        <title>The Corynebacterium glutamicum genome: features and impacts on biotechnological processes.</title>
        <authorList>
            <person name="Ikeda M."/>
            <person name="Nakagawa S."/>
        </authorList>
    </citation>
    <scope>NUCLEOTIDE SEQUENCE [LARGE SCALE GENOMIC DNA]</scope>
    <source>
        <strain>ATCC 13032 / DSM 20300 / JCM 1318 / BCRC 11384 / CCUG 27702 / LMG 3730 / NBRC 12168 / NCIMB 10025 / NRRL B-2784 / 534</strain>
    </source>
</reference>
<reference key="2">
    <citation type="journal article" date="2003" name="J. Biotechnol.">
        <title>The complete Corynebacterium glutamicum ATCC 13032 genome sequence and its impact on the production of L-aspartate-derived amino acids and vitamins.</title>
        <authorList>
            <person name="Kalinowski J."/>
            <person name="Bathe B."/>
            <person name="Bartels D."/>
            <person name="Bischoff N."/>
            <person name="Bott M."/>
            <person name="Burkovski A."/>
            <person name="Dusch N."/>
            <person name="Eggeling L."/>
            <person name="Eikmanns B.J."/>
            <person name="Gaigalat L."/>
            <person name="Goesmann A."/>
            <person name="Hartmann M."/>
            <person name="Huthmacher K."/>
            <person name="Kraemer R."/>
            <person name="Linke B."/>
            <person name="McHardy A.C."/>
            <person name="Meyer F."/>
            <person name="Moeckel B."/>
            <person name="Pfefferle W."/>
            <person name="Puehler A."/>
            <person name="Rey D.A."/>
            <person name="Rueckert C."/>
            <person name="Rupp O."/>
            <person name="Sahm H."/>
            <person name="Wendisch V.F."/>
            <person name="Wiegraebe I."/>
            <person name="Tauch A."/>
        </authorList>
    </citation>
    <scope>NUCLEOTIDE SEQUENCE [LARGE SCALE GENOMIC DNA]</scope>
    <source>
        <strain>ATCC 13032 / DSM 20300 / JCM 1318 / BCRC 11384 / CCUG 27702 / LMG 3730 / NBRC 12168 / NCIMB 10025 / NRRL B-2784 / 534</strain>
    </source>
</reference>
<feature type="chain" id="PRO_0000176634" description="Large ribosomal subunit protein bL9">
    <location>
        <begin position="1"/>
        <end position="150"/>
    </location>
</feature>
<name>RL9_CORGL</name>
<gene>
    <name evidence="1" type="primary">rplI</name>
    <name type="ordered locus">Cgl2981</name>
    <name type="ordered locus">cg3306</name>
</gene>
<accession>Q8NLG1</accession>
<dbReference type="EMBL" id="BA000036">
    <property type="protein sequence ID" value="BAC00375.1"/>
    <property type="molecule type" value="Genomic_DNA"/>
</dbReference>
<dbReference type="EMBL" id="BX927157">
    <property type="protein sequence ID" value="CAF18920.1"/>
    <property type="molecule type" value="Genomic_DNA"/>
</dbReference>
<dbReference type="RefSeq" id="NP_602176.1">
    <property type="nucleotide sequence ID" value="NC_003450.3"/>
</dbReference>
<dbReference type="RefSeq" id="WP_011015544.1">
    <property type="nucleotide sequence ID" value="NC_006958.1"/>
</dbReference>
<dbReference type="SMR" id="Q8NLG1"/>
<dbReference type="STRING" id="196627.cg3306"/>
<dbReference type="GeneID" id="1020923"/>
<dbReference type="KEGG" id="cgb:cg3306"/>
<dbReference type="KEGG" id="cgl:Cgl2981"/>
<dbReference type="PATRIC" id="fig|196627.13.peg.2914"/>
<dbReference type="eggNOG" id="COG0359">
    <property type="taxonomic scope" value="Bacteria"/>
</dbReference>
<dbReference type="HOGENOM" id="CLU_078938_5_1_11"/>
<dbReference type="OrthoDB" id="9788336at2"/>
<dbReference type="BioCyc" id="CORYNE:G18NG-12602-MONOMER"/>
<dbReference type="Proteomes" id="UP000000582">
    <property type="component" value="Chromosome"/>
</dbReference>
<dbReference type="Proteomes" id="UP000001009">
    <property type="component" value="Chromosome"/>
</dbReference>
<dbReference type="GO" id="GO:1990904">
    <property type="term" value="C:ribonucleoprotein complex"/>
    <property type="evidence" value="ECO:0007669"/>
    <property type="project" value="UniProtKB-KW"/>
</dbReference>
<dbReference type="GO" id="GO:0005840">
    <property type="term" value="C:ribosome"/>
    <property type="evidence" value="ECO:0007669"/>
    <property type="project" value="UniProtKB-KW"/>
</dbReference>
<dbReference type="GO" id="GO:0019843">
    <property type="term" value="F:rRNA binding"/>
    <property type="evidence" value="ECO:0007669"/>
    <property type="project" value="UniProtKB-UniRule"/>
</dbReference>
<dbReference type="GO" id="GO:0003735">
    <property type="term" value="F:structural constituent of ribosome"/>
    <property type="evidence" value="ECO:0007669"/>
    <property type="project" value="InterPro"/>
</dbReference>
<dbReference type="GO" id="GO:0006412">
    <property type="term" value="P:translation"/>
    <property type="evidence" value="ECO:0007669"/>
    <property type="project" value="UniProtKB-UniRule"/>
</dbReference>
<dbReference type="FunFam" id="3.40.5.10:FF:000003">
    <property type="entry name" value="50S ribosomal protein L9"/>
    <property type="match status" value="1"/>
</dbReference>
<dbReference type="Gene3D" id="3.10.430.100">
    <property type="entry name" value="Ribosomal protein L9, C-terminal domain"/>
    <property type="match status" value="1"/>
</dbReference>
<dbReference type="Gene3D" id="3.40.5.10">
    <property type="entry name" value="Ribosomal protein L9, N-terminal domain"/>
    <property type="match status" value="1"/>
</dbReference>
<dbReference type="HAMAP" id="MF_00503">
    <property type="entry name" value="Ribosomal_bL9"/>
    <property type="match status" value="1"/>
</dbReference>
<dbReference type="InterPro" id="IPR000244">
    <property type="entry name" value="Ribosomal_bL9"/>
</dbReference>
<dbReference type="InterPro" id="IPR009027">
    <property type="entry name" value="Ribosomal_bL9/RNase_H1_N"/>
</dbReference>
<dbReference type="InterPro" id="IPR020594">
    <property type="entry name" value="Ribosomal_bL9_bac/chp"/>
</dbReference>
<dbReference type="InterPro" id="IPR020069">
    <property type="entry name" value="Ribosomal_bL9_C"/>
</dbReference>
<dbReference type="InterPro" id="IPR036791">
    <property type="entry name" value="Ribosomal_bL9_C_sf"/>
</dbReference>
<dbReference type="InterPro" id="IPR020070">
    <property type="entry name" value="Ribosomal_bL9_N"/>
</dbReference>
<dbReference type="InterPro" id="IPR036935">
    <property type="entry name" value="Ribosomal_bL9_N_sf"/>
</dbReference>
<dbReference type="NCBIfam" id="TIGR00158">
    <property type="entry name" value="L9"/>
    <property type="match status" value="1"/>
</dbReference>
<dbReference type="PANTHER" id="PTHR21368">
    <property type="entry name" value="50S RIBOSOMAL PROTEIN L9"/>
    <property type="match status" value="1"/>
</dbReference>
<dbReference type="Pfam" id="PF03948">
    <property type="entry name" value="Ribosomal_L9_C"/>
    <property type="match status" value="1"/>
</dbReference>
<dbReference type="Pfam" id="PF01281">
    <property type="entry name" value="Ribosomal_L9_N"/>
    <property type="match status" value="1"/>
</dbReference>
<dbReference type="SUPFAM" id="SSF55658">
    <property type="entry name" value="L9 N-domain-like"/>
    <property type="match status" value="1"/>
</dbReference>
<dbReference type="SUPFAM" id="SSF55653">
    <property type="entry name" value="Ribosomal protein L9 C-domain"/>
    <property type="match status" value="1"/>
</dbReference>
<dbReference type="PROSITE" id="PS00651">
    <property type="entry name" value="RIBOSOMAL_L9"/>
    <property type="match status" value="1"/>
</dbReference>
<comment type="function">
    <text evidence="1">Binds to the 23S rRNA.</text>
</comment>
<comment type="similarity">
    <text evidence="1">Belongs to the bacterial ribosomal protein bL9 family.</text>
</comment>